<evidence type="ECO:0000250" key="1"/>
<evidence type="ECO:0000250" key="2">
    <source>
        <dbReference type="UniProtKB" id="P16066"/>
    </source>
</evidence>
<evidence type="ECO:0000250" key="3">
    <source>
        <dbReference type="UniProtKB" id="P16067"/>
    </source>
</evidence>
<evidence type="ECO:0000250" key="4">
    <source>
        <dbReference type="UniProtKB" id="P20594"/>
    </source>
</evidence>
<evidence type="ECO:0000255" key="5"/>
<evidence type="ECO:0000255" key="6">
    <source>
        <dbReference type="PROSITE-ProRule" id="PRU00099"/>
    </source>
</evidence>
<evidence type="ECO:0000255" key="7">
    <source>
        <dbReference type="PROSITE-ProRule" id="PRU00159"/>
    </source>
</evidence>
<evidence type="ECO:0000305" key="8"/>
<sequence length="1047" mass="117146">MALPSLLLVVAALAGGVRPPGARNLTLAVVLPEHNLSYAWAWPRVGPAVALAMEALGRALPVDLRFVSSELDGACSEYLAPLRAVDLKLYHDPDLLLGPGCVYPAASVARFASHWRLPLLTAGAVASGFSAKSEHYRTLVRTGPSAPKLGEFVVMLHGHFNWTARAALLYLDARTDDRPHYFTIEGVFEALQGSNLSVQHQVYAREPGGPEQATHFIRANGRIVYICGPLEMLHEILLQAQRENLTNGDYVFFYLDVFGESLRAGPTRSMGRPWQDNRTREQAQALREAFQTVLVITYREPPNPEYQEFQNRLLIRAREDFGVELAPSLMNLIAGCFYDGILLYAEVLNETIQEGGTREDGLRIVEKMQGRRYRGVTGLVVMDKNNDRETDFVLWAMGDLVSGDFQPAAHYSGAEKQIWWTGRPIPWVKGVPPLDNPPCAFDMDDPSCDKTPLSTLAIVALGTGITFIMFGVSSFLIFRKLMLEKELASMLWRIRWEELQFGNSERCHKGAGSRLTLSLRGSSYGSLMTAHGKYQIFANTGHFKGNVVAIKHVNKKRIELTRQVLFELKHMRDVQFNHLTRFIGACIDPPNICIVTEYCPRGSLQDILENDSINLDWMFRYSLINDLVKGMAFLHNSIIASHGSLKSSNCVVDSRFVLKITDYGLASFRSTAEPDDSHALYAKKLWTAPELLSGNPLPTTGMQKADVYSFGIILQEIALRSGPFYLEGLDLSPKEIVQKVRNGQRPYFRPSIDRTQLNEELVLLMERCWAQDPAERPDFGQIKGFIRRFNKEGGTSILDNLLLRMEQYANNLEKLVEERTQAYLEEKRKAEALLYQILPHSVAEQLKRGETVQAEAFDSVTIYFSDIVGFTALSAESTPMQVVTLLNDLYTCFDAIIDNFDVYKVETIGDAYMVVSGLPGRNGQRHAPEIARMALALLDAVSSFRIRHRPHDQLRLRIGVHTGPVCAGVVGLKMPRYCLFGDTVNTASRMESNGQALKIHVSSTTKDALDELGCFQLELRGDVEMKGKGKMRTYWLLGERKGPAGLL</sequence>
<gene>
    <name type="primary">NPR2</name>
</gene>
<dbReference type="EC" id="4.6.1.2" evidence="4"/>
<dbReference type="EMBL" id="L26359">
    <property type="protein sequence ID" value="AAC41619.1"/>
    <property type="molecule type" value="mRNA"/>
</dbReference>
<dbReference type="EMBL" id="X66865">
    <property type="protein sequence ID" value="CAA47334.1"/>
    <property type="molecule type" value="mRNA"/>
</dbReference>
<dbReference type="PIR" id="I45882">
    <property type="entry name" value="I45882"/>
</dbReference>
<dbReference type="RefSeq" id="NP_776551.1">
    <property type="nucleotide sequence ID" value="NM_174126.2"/>
</dbReference>
<dbReference type="RefSeq" id="XP_010806265.1">
    <property type="nucleotide sequence ID" value="XM_010807963.2"/>
</dbReference>
<dbReference type="SMR" id="P46197"/>
<dbReference type="FunCoup" id="P46197">
    <property type="interactions" value="1098"/>
</dbReference>
<dbReference type="STRING" id="9913.ENSBTAP00000015204"/>
<dbReference type="BindingDB" id="P46197"/>
<dbReference type="ChEMBL" id="CHEMBL2156"/>
<dbReference type="GlyCosmos" id="P46197">
    <property type="glycosylation" value="7 sites, No reported glycans"/>
</dbReference>
<dbReference type="GlyGen" id="P46197">
    <property type="glycosylation" value="7 sites"/>
</dbReference>
<dbReference type="PaxDb" id="9913-ENSBTAP00000015204"/>
<dbReference type="GeneID" id="281357"/>
<dbReference type="KEGG" id="bta:281357"/>
<dbReference type="CTD" id="4882"/>
<dbReference type="VEuPathDB" id="HostDB:ENSBTAG00000011434"/>
<dbReference type="eggNOG" id="KOG1023">
    <property type="taxonomic scope" value="Eukaryota"/>
</dbReference>
<dbReference type="HOGENOM" id="CLU_013995_0_0_1"/>
<dbReference type="InParanoid" id="P46197"/>
<dbReference type="OMA" id="SEMDGAC"/>
<dbReference type="OrthoDB" id="1890790at2759"/>
<dbReference type="Reactome" id="R-BTA-5578768">
    <property type="pathway name" value="Physiological factors"/>
</dbReference>
<dbReference type="Proteomes" id="UP000009136">
    <property type="component" value="Chromosome 8"/>
</dbReference>
<dbReference type="Bgee" id="ENSBTAG00000011434">
    <property type="expression patterns" value="Expressed in uterine horn and 104 other cell types or tissues"/>
</dbReference>
<dbReference type="GO" id="GO:0005886">
    <property type="term" value="C:plasma membrane"/>
    <property type="evidence" value="ECO:0000250"/>
    <property type="project" value="UniProtKB"/>
</dbReference>
<dbReference type="GO" id="GO:0005524">
    <property type="term" value="F:ATP binding"/>
    <property type="evidence" value="ECO:0007669"/>
    <property type="project" value="InterPro"/>
</dbReference>
<dbReference type="GO" id="GO:0005525">
    <property type="term" value="F:GTP binding"/>
    <property type="evidence" value="ECO:0007669"/>
    <property type="project" value="UniProtKB-KW"/>
</dbReference>
<dbReference type="GO" id="GO:0004383">
    <property type="term" value="F:guanylate cyclase activity"/>
    <property type="evidence" value="ECO:0000250"/>
    <property type="project" value="UniProtKB"/>
</dbReference>
<dbReference type="GO" id="GO:0042802">
    <property type="term" value="F:identical protein binding"/>
    <property type="evidence" value="ECO:0000250"/>
    <property type="project" value="AgBase"/>
</dbReference>
<dbReference type="GO" id="GO:0016941">
    <property type="term" value="F:natriuretic peptide receptor activity"/>
    <property type="evidence" value="ECO:0000250"/>
    <property type="project" value="UniProtKB"/>
</dbReference>
<dbReference type="GO" id="GO:0017046">
    <property type="term" value="F:peptide hormone binding"/>
    <property type="evidence" value="ECO:0000318"/>
    <property type="project" value="GO_Central"/>
</dbReference>
<dbReference type="GO" id="GO:0004672">
    <property type="term" value="F:protein kinase activity"/>
    <property type="evidence" value="ECO:0007669"/>
    <property type="project" value="InterPro"/>
</dbReference>
<dbReference type="GO" id="GO:0006182">
    <property type="term" value="P:cGMP biosynthetic process"/>
    <property type="evidence" value="ECO:0000250"/>
    <property type="project" value="AgBase"/>
</dbReference>
<dbReference type="GO" id="GO:0035556">
    <property type="term" value="P:intracellular signal transduction"/>
    <property type="evidence" value="ECO:0007669"/>
    <property type="project" value="InterPro"/>
</dbReference>
<dbReference type="GO" id="GO:0001503">
    <property type="term" value="P:ossification"/>
    <property type="evidence" value="ECO:0007669"/>
    <property type="project" value="UniProtKB-KW"/>
</dbReference>
<dbReference type="GO" id="GO:0007168">
    <property type="term" value="P:receptor guanylyl cyclase signaling pathway"/>
    <property type="evidence" value="ECO:0000250"/>
    <property type="project" value="UniProtKB"/>
</dbReference>
<dbReference type="CDD" id="cd07302">
    <property type="entry name" value="CHD"/>
    <property type="match status" value="1"/>
</dbReference>
<dbReference type="CDD" id="cd14042">
    <property type="entry name" value="PK_GC-A_B"/>
    <property type="match status" value="1"/>
</dbReference>
<dbReference type="FunFam" id="1.10.510.10:FF:000270">
    <property type="entry name" value="Guanylate cyclase"/>
    <property type="match status" value="1"/>
</dbReference>
<dbReference type="FunFam" id="3.30.200.20:FF:001106">
    <property type="entry name" value="Guanylate cyclase"/>
    <property type="match status" value="1"/>
</dbReference>
<dbReference type="FunFam" id="3.30.70.1230:FF:000004">
    <property type="entry name" value="Guanylate cyclase"/>
    <property type="match status" value="1"/>
</dbReference>
<dbReference type="FunFam" id="3.40.50.2300:FF:000101">
    <property type="entry name" value="Guanylate cyclase"/>
    <property type="match status" value="1"/>
</dbReference>
<dbReference type="FunFam" id="3.40.50.2300:FF:000245">
    <property type="entry name" value="Guanylate cyclase"/>
    <property type="match status" value="1"/>
</dbReference>
<dbReference type="Gene3D" id="3.40.50.2300">
    <property type="match status" value="2"/>
</dbReference>
<dbReference type="Gene3D" id="3.30.70.1230">
    <property type="entry name" value="Nucleotide cyclase"/>
    <property type="match status" value="1"/>
</dbReference>
<dbReference type="Gene3D" id="1.10.510.10">
    <property type="entry name" value="Transferase(Phosphotransferase) domain 1"/>
    <property type="match status" value="1"/>
</dbReference>
<dbReference type="InterPro" id="IPR001054">
    <property type="entry name" value="A/G_cyclase"/>
</dbReference>
<dbReference type="InterPro" id="IPR018297">
    <property type="entry name" value="A/G_cyclase_CS"/>
</dbReference>
<dbReference type="InterPro" id="IPR001828">
    <property type="entry name" value="ANF_lig-bd_rcpt"/>
</dbReference>
<dbReference type="InterPro" id="IPR001170">
    <property type="entry name" value="ANPR/GUC"/>
</dbReference>
<dbReference type="InterPro" id="IPR050401">
    <property type="entry name" value="Cyclic_nucleotide_synthase"/>
</dbReference>
<dbReference type="InterPro" id="IPR011009">
    <property type="entry name" value="Kinase-like_dom_sf"/>
</dbReference>
<dbReference type="InterPro" id="IPR029787">
    <property type="entry name" value="Nucleotide_cyclase"/>
</dbReference>
<dbReference type="InterPro" id="IPR028082">
    <property type="entry name" value="Peripla_BP_I"/>
</dbReference>
<dbReference type="InterPro" id="IPR000719">
    <property type="entry name" value="Prot_kinase_dom"/>
</dbReference>
<dbReference type="InterPro" id="IPR001245">
    <property type="entry name" value="Ser-Thr/Tyr_kinase_cat_dom"/>
</dbReference>
<dbReference type="PANTHER" id="PTHR11920:SF494">
    <property type="entry name" value="ATRIAL NATRIURETIC PEPTIDE RECEPTOR 2"/>
    <property type="match status" value="1"/>
</dbReference>
<dbReference type="PANTHER" id="PTHR11920">
    <property type="entry name" value="GUANYLYL CYCLASE"/>
    <property type="match status" value="1"/>
</dbReference>
<dbReference type="Pfam" id="PF01094">
    <property type="entry name" value="ANF_receptor"/>
    <property type="match status" value="1"/>
</dbReference>
<dbReference type="Pfam" id="PF00211">
    <property type="entry name" value="Guanylate_cyc"/>
    <property type="match status" value="1"/>
</dbReference>
<dbReference type="Pfam" id="PF07714">
    <property type="entry name" value="PK_Tyr_Ser-Thr"/>
    <property type="match status" value="1"/>
</dbReference>
<dbReference type="PRINTS" id="PR00255">
    <property type="entry name" value="NATPEPTIDER"/>
</dbReference>
<dbReference type="SMART" id="SM00044">
    <property type="entry name" value="CYCc"/>
    <property type="match status" value="1"/>
</dbReference>
<dbReference type="SUPFAM" id="SSF55073">
    <property type="entry name" value="Nucleotide cyclase"/>
    <property type="match status" value="1"/>
</dbReference>
<dbReference type="SUPFAM" id="SSF53822">
    <property type="entry name" value="Periplasmic binding protein-like I"/>
    <property type="match status" value="1"/>
</dbReference>
<dbReference type="SUPFAM" id="SSF56112">
    <property type="entry name" value="Protein kinase-like (PK-like)"/>
    <property type="match status" value="1"/>
</dbReference>
<dbReference type="PROSITE" id="PS00458">
    <property type="entry name" value="ANF_RECEPTORS"/>
    <property type="match status" value="1"/>
</dbReference>
<dbReference type="PROSITE" id="PS00452">
    <property type="entry name" value="GUANYLATE_CYCLASE_1"/>
    <property type="match status" value="1"/>
</dbReference>
<dbReference type="PROSITE" id="PS50125">
    <property type="entry name" value="GUANYLATE_CYCLASE_2"/>
    <property type="match status" value="1"/>
</dbReference>
<dbReference type="PROSITE" id="PS50011">
    <property type="entry name" value="PROTEIN_KINASE_DOM"/>
    <property type="match status" value="1"/>
</dbReference>
<keyword id="KW-1003">Cell membrane</keyword>
<keyword id="KW-0141">cGMP biosynthesis</keyword>
<keyword id="KW-1015">Disulfide bond</keyword>
<keyword id="KW-0325">Glycoprotein</keyword>
<keyword id="KW-0342">GTP-binding</keyword>
<keyword id="KW-0456">Lyase</keyword>
<keyword id="KW-0472">Membrane</keyword>
<keyword id="KW-0547">Nucleotide-binding</keyword>
<keyword id="KW-0892">Osteogenesis</keyword>
<keyword id="KW-0597">Phosphoprotein</keyword>
<keyword id="KW-0675">Receptor</keyword>
<keyword id="KW-1185">Reference proteome</keyword>
<keyword id="KW-0732">Signal</keyword>
<keyword id="KW-0812">Transmembrane</keyword>
<keyword id="KW-1133">Transmembrane helix</keyword>
<protein>
    <recommendedName>
        <fullName>Atrial natriuretic peptide receptor 2</fullName>
        <ecNumber evidence="4">4.6.1.2</ecNumber>
    </recommendedName>
    <alternativeName>
        <fullName>Atrial natriuretic peptide receptor type B</fullName>
        <shortName>ANP-B</shortName>
        <shortName>ANPR-B</shortName>
        <shortName>NPR-B</shortName>
    </alternativeName>
    <alternativeName>
        <fullName>Guanylate cyclase B</fullName>
        <shortName>GC-B</shortName>
    </alternativeName>
</protein>
<proteinExistence type="evidence at transcript level"/>
<accession>P46197</accession>
<reference key="1">
    <citation type="journal article" date="1994" name="Mol. Cell. Biochem.">
        <title>Cloning and functional expression of the bovine natriuretic peptide receptor-B (natriuretic factor R1c subtype).</title>
        <authorList>
            <person name="Fenrick R."/>
            <person name="Babinski K."/>
            <person name="McNicoll N."/>
            <person name="Therrien N."/>
            <person name="Drouin J."/>
            <person name="de Lean A."/>
        </authorList>
    </citation>
    <scope>NUCLEOTIDE SEQUENCE [MRNA]</scope>
    <source>
        <tissue>Brain</tissue>
    </source>
</reference>
<reference key="2">
    <citation type="journal article" date="1993" name="Bioorg. Khim.">
        <title>Detection of expression of a membrane form of the guanylate cyclase type of GC-B in cattle retina.</title>
        <authorList>
            <person name="Shmukler B.E."/>
            <person name="Zubov D.V."/>
            <person name="Abdulaev N.G."/>
        </authorList>
    </citation>
    <scope>NUCLEOTIDE SEQUENCE [MRNA] OF 551-1047</scope>
    <source>
        <tissue>Retina</tissue>
    </source>
</reference>
<name>ANPRB_BOVIN</name>
<comment type="function">
    <text evidence="4">Receptor for the C-type natriuretic peptide NPPC/CNP hormone. Has guanylate cyclase activity upon binding of its ligand. May play a role in the regulation of skeletal growth.</text>
</comment>
<comment type="catalytic activity">
    <reaction evidence="4">
        <text>GTP = 3',5'-cyclic GMP + diphosphate</text>
        <dbReference type="Rhea" id="RHEA:13665"/>
        <dbReference type="ChEBI" id="CHEBI:33019"/>
        <dbReference type="ChEBI" id="CHEBI:37565"/>
        <dbReference type="ChEBI" id="CHEBI:57746"/>
        <dbReference type="EC" id="4.6.1.2"/>
    </reaction>
</comment>
<comment type="subcellular location">
    <subcellularLocation>
        <location evidence="4">Cell membrane</location>
        <topology evidence="4">Single-pass type I membrane protein</topology>
    </subcellularLocation>
</comment>
<comment type="PTM">
    <text evidence="3">Phosphorylated. Phosphorylation of the protein kinase-like domain is required for full activation by CNP.</text>
</comment>
<comment type="PTM">
    <text evidence="4">Glycosylated.</text>
</comment>
<comment type="similarity">
    <text evidence="6">Belongs to the adenylyl cyclase class-4/guanylyl cyclase family.</text>
</comment>
<organism>
    <name type="scientific">Bos taurus</name>
    <name type="common">Bovine</name>
    <dbReference type="NCBI Taxonomy" id="9913"/>
    <lineage>
        <taxon>Eukaryota</taxon>
        <taxon>Metazoa</taxon>
        <taxon>Chordata</taxon>
        <taxon>Craniata</taxon>
        <taxon>Vertebrata</taxon>
        <taxon>Euteleostomi</taxon>
        <taxon>Mammalia</taxon>
        <taxon>Eutheria</taxon>
        <taxon>Laurasiatheria</taxon>
        <taxon>Artiodactyla</taxon>
        <taxon>Ruminantia</taxon>
        <taxon>Pecora</taxon>
        <taxon>Bovidae</taxon>
        <taxon>Bovinae</taxon>
        <taxon>Bos</taxon>
    </lineage>
</organism>
<feature type="signal peptide" evidence="5">
    <location>
        <begin position="1"/>
        <end position="16"/>
    </location>
</feature>
<feature type="chain" id="PRO_0000012363" description="Atrial natriuretic peptide receptor 2">
    <location>
        <begin position="17"/>
        <end position="1047"/>
    </location>
</feature>
<feature type="topological domain" description="Extracellular" evidence="5">
    <location>
        <begin position="17"/>
        <end position="458"/>
    </location>
</feature>
<feature type="transmembrane region" description="Helical" evidence="5">
    <location>
        <begin position="459"/>
        <end position="478"/>
    </location>
</feature>
<feature type="topological domain" description="Cytoplasmic" evidence="5">
    <location>
        <begin position="479"/>
        <end position="1047"/>
    </location>
</feature>
<feature type="domain" description="Protein kinase" evidence="7">
    <location>
        <begin position="513"/>
        <end position="786"/>
    </location>
</feature>
<feature type="domain" description="Guanylate cyclase" evidence="6">
    <location>
        <begin position="861"/>
        <end position="991"/>
    </location>
</feature>
<feature type="modified residue" description="Phosphoserine" evidence="4">
    <location>
        <position position="513"/>
    </location>
</feature>
<feature type="modified residue" description="Phosphothreonine" evidence="4">
    <location>
        <position position="516"/>
    </location>
</feature>
<feature type="modified residue" description="Phosphoserine" evidence="4">
    <location>
        <position position="518"/>
    </location>
</feature>
<feature type="modified residue" description="Phosphoserine" evidence="2">
    <location>
        <position position="522"/>
    </location>
</feature>
<feature type="modified residue" description="Phosphoserine" evidence="4">
    <location>
        <position position="523"/>
    </location>
</feature>
<feature type="modified residue" description="Phosphoserine" evidence="4">
    <location>
        <position position="526"/>
    </location>
</feature>
<feature type="modified residue" description="Phosphothreonine" evidence="4">
    <location>
        <position position="529"/>
    </location>
</feature>
<feature type="glycosylation site" description="N-linked (GlcNAc...) asparagine" evidence="5">
    <location>
        <position position="24"/>
    </location>
</feature>
<feature type="glycosylation site" description="N-linked (GlcNAc...) asparagine" evidence="5">
    <location>
        <position position="35"/>
    </location>
</feature>
<feature type="glycosylation site" description="N-linked (GlcNAc...) asparagine" evidence="5">
    <location>
        <position position="161"/>
    </location>
</feature>
<feature type="glycosylation site" description="N-linked (GlcNAc...) asparagine" evidence="5">
    <location>
        <position position="195"/>
    </location>
</feature>
<feature type="glycosylation site" description="N-linked (GlcNAc...) asparagine" evidence="5">
    <location>
        <position position="244"/>
    </location>
</feature>
<feature type="glycosylation site" description="N-linked (GlcNAc...) asparagine" evidence="5">
    <location>
        <position position="277"/>
    </location>
</feature>
<feature type="glycosylation site" description="N-linked (GlcNAc...) asparagine" evidence="5">
    <location>
        <position position="349"/>
    </location>
</feature>
<feature type="disulfide bond" evidence="1">
    <location>
        <begin position="75"/>
        <end position="101"/>
    </location>
</feature>
<feature type="disulfide bond" description="Interchain" evidence="8">
    <location>
        <position position="439"/>
    </location>
</feature>
<feature type="disulfide bond" description="Interchain" evidence="8">
    <location>
        <position position="448"/>
    </location>
</feature>
<feature type="sequence conflict" description="In Ref. 2; CAA47334." evidence="8" ref="2">
    <original>I</original>
    <variation>L</variation>
    <location>
        <position position="958"/>
    </location>
</feature>